<organism>
    <name type="scientific">Prochlorococcus marinus (strain MIT 9313)</name>
    <dbReference type="NCBI Taxonomy" id="74547"/>
    <lineage>
        <taxon>Bacteria</taxon>
        <taxon>Bacillati</taxon>
        <taxon>Cyanobacteriota</taxon>
        <taxon>Cyanophyceae</taxon>
        <taxon>Synechococcales</taxon>
        <taxon>Prochlorococcaceae</taxon>
        <taxon>Prochlorococcus</taxon>
    </lineage>
</organism>
<dbReference type="EC" id="6.1.1.6" evidence="1"/>
<dbReference type="EMBL" id="BX548175">
    <property type="protein sequence ID" value="CAE20322.1"/>
    <property type="molecule type" value="Genomic_DNA"/>
</dbReference>
<dbReference type="RefSeq" id="WP_011129526.1">
    <property type="nucleotide sequence ID" value="NC_005071.1"/>
</dbReference>
<dbReference type="SMR" id="Q7U3A4"/>
<dbReference type="KEGG" id="pmt:PMT_0147"/>
<dbReference type="eggNOG" id="COG1190">
    <property type="taxonomic scope" value="Bacteria"/>
</dbReference>
<dbReference type="HOGENOM" id="CLU_008255_6_0_3"/>
<dbReference type="OrthoDB" id="9802326at2"/>
<dbReference type="Proteomes" id="UP000001423">
    <property type="component" value="Chromosome"/>
</dbReference>
<dbReference type="GO" id="GO:0005829">
    <property type="term" value="C:cytosol"/>
    <property type="evidence" value="ECO:0007669"/>
    <property type="project" value="TreeGrafter"/>
</dbReference>
<dbReference type="GO" id="GO:0005524">
    <property type="term" value="F:ATP binding"/>
    <property type="evidence" value="ECO:0007669"/>
    <property type="project" value="UniProtKB-UniRule"/>
</dbReference>
<dbReference type="GO" id="GO:0004824">
    <property type="term" value="F:lysine-tRNA ligase activity"/>
    <property type="evidence" value="ECO:0007669"/>
    <property type="project" value="UniProtKB-UniRule"/>
</dbReference>
<dbReference type="GO" id="GO:0000287">
    <property type="term" value="F:magnesium ion binding"/>
    <property type="evidence" value="ECO:0007669"/>
    <property type="project" value="UniProtKB-UniRule"/>
</dbReference>
<dbReference type="GO" id="GO:0000049">
    <property type="term" value="F:tRNA binding"/>
    <property type="evidence" value="ECO:0007669"/>
    <property type="project" value="TreeGrafter"/>
</dbReference>
<dbReference type="GO" id="GO:0006430">
    <property type="term" value="P:lysyl-tRNA aminoacylation"/>
    <property type="evidence" value="ECO:0007669"/>
    <property type="project" value="UniProtKB-UniRule"/>
</dbReference>
<dbReference type="CDD" id="cd00775">
    <property type="entry name" value="LysRS_core"/>
    <property type="match status" value="1"/>
</dbReference>
<dbReference type="CDD" id="cd04322">
    <property type="entry name" value="LysRS_N"/>
    <property type="match status" value="1"/>
</dbReference>
<dbReference type="FunFam" id="2.40.50.140:FF:000024">
    <property type="entry name" value="Lysine--tRNA ligase"/>
    <property type="match status" value="1"/>
</dbReference>
<dbReference type="FunFam" id="3.30.930.10:FF:000238">
    <property type="entry name" value="Lysine--tRNA ligase"/>
    <property type="match status" value="1"/>
</dbReference>
<dbReference type="Gene3D" id="3.30.930.10">
    <property type="entry name" value="Bira Bifunctional Protein, Domain 2"/>
    <property type="match status" value="1"/>
</dbReference>
<dbReference type="Gene3D" id="2.40.50.140">
    <property type="entry name" value="Nucleic acid-binding proteins"/>
    <property type="match status" value="1"/>
</dbReference>
<dbReference type="HAMAP" id="MF_00252">
    <property type="entry name" value="Lys_tRNA_synth_class2"/>
    <property type="match status" value="1"/>
</dbReference>
<dbReference type="InterPro" id="IPR004364">
    <property type="entry name" value="Aa-tRNA-synt_II"/>
</dbReference>
<dbReference type="InterPro" id="IPR006195">
    <property type="entry name" value="aa-tRNA-synth_II"/>
</dbReference>
<dbReference type="InterPro" id="IPR045864">
    <property type="entry name" value="aa-tRNA-synth_II/BPL/LPL"/>
</dbReference>
<dbReference type="InterPro" id="IPR002313">
    <property type="entry name" value="Lys-tRNA-ligase_II"/>
</dbReference>
<dbReference type="InterPro" id="IPR044136">
    <property type="entry name" value="Lys-tRNA-ligase_II_N"/>
</dbReference>
<dbReference type="InterPro" id="IPR018149">
    <property type="entry name" value="Lys-tRNA-synth_II_C"/>
</dbReference>
<dbReference type="InterPro" id="IPR012340">
    <property type="entry name" value="NA-bd_OB-fold"/>
</dbReference>
<dbReference type="InterPro" id="IPR004365">
    <property type="entry name" value="NA-bd_OB_tRNA"/>
</dbReference>
<dbReference type="NCBIfam" id="TIGR00499">
    <property type="entry name" value="lysS_bact"/>
    <property type="match status" value="1"/>
</dbReference>
<dbReference type="NCBIfam" id="NF001756">
    <property type="entry name" value="PRK00484.1"/>
    <property type="match status" value="1"/>
</dbReference>
<dbReference type="PANTHER" id="PTHR42918:SF15">
    <property type="entry name" value="LYSINE--TRNA LIGASE, CHLOROPLASTIC_MITOCHONDRIAL"/>
    <property type="match status" value="1"/>
</dbReference>
<dbReference type="PANTHER" id="PTHR42918">
    <property type="entry name" value="LYSYL-TRNA SYNTHETASE"/>
    <property type="match status" value="1"/>
</dbReference>
<dbReference type="Pfam" id="PF00152">
    <property type="entry name" value="tRNA-synt_2"/>
    <property type="match status" value="1"/>
</dbReference>
<dbReference type="Pfam" id="PF01336">
    <property type="entry name" value="tRNA_anti-codon"/>
    <property type="match status" value="1"/>
</dbReference>
<dbReference type="PRINTS" id="PR00982">
    <property type="entry name" value="TRNASYNTHLYS"/>
</dbReference>
<dbReference type="SUPFAM" id="SSF55681">
    <property type="entry name" value="Class II aaRS and biotin synthetases"/>
    <property type="match status" value="1"/>
</dbReference>
<dbReference type="SUPFAM" id="SSF50249">
    <property type="entry name" value="Nucleic acid-binding proteins"/>
    <property type="match status" value="1"/>
</dbReference>
<dbReference type="PROSITE" id="PS50862">
    <property type="entry name" value="AA_TRNA_LIGASE_II"/>
    <property type="match status" value="1"/>
</dbReference>
<feature type="chain" id="PRO_0000152666" description="Lysine--tRNA ligase">
    <location>
        <begin position="1"/>
        <end position="508"/>
    </location>
</feature>
<feature type="binding site" evidence="1">
    <location>
        <position position="416"/>
    </location>
    <ligand>
        <name>Mg(2+)</name>
        <dbReference type="ChEBI" id="CHEBI:18420"/>
        <label>1</label>
    </ligand>
</feature>
<feature type="binding site" evidence="1">
    <location>
        <position position="423"/>
    </location>
    <ligand>
        <name>Mg(2+)</name>
        <dbReference type="ChEBI" id="CHEBI:18420"/>
        <label>1</label>
    </ligand>
</feature>
<feature type="binding site" evidence="1">
    <location>
        <position position="423"/>
    </location>
    <ligand>
        <name>Mg(2+)</name>
        <dbReference type="ChEBI" id="CHEBI:18420"/>
        <label>2</label>
    </ligand>
</feature>
<accession>Q7U3A4</accession>
<gene>
    <name evidence="1" type="primary">lysS</name>
    <name type="ordered locus">PMT_0147</name>
</gene>
<reference key="1">
    <citation type="journal article" date="2003" name="Nature">
        <title>Genome divergence in two Prochlorococcus ecotypes reflects oceanic niche differentiation.</title>
        <authorList>
            <person name="Rocap G."/>
            <person name="Larimer F.W."/>
            <person name="Lamerdin J.E."/>
            <person name="Malfatti S."/>
            <person name="Chain P."/>
            <person name="Ahlgren N.A."/>
            <person name="Arellano A."/>
            <person name="Coleman M."/>
            <person name="Hauser L."/>
            <person name="Hess W.R."/>
            <person name="Johnson Z.I."/>
            <person name="Land M.L."/>
            <person name="Lindell D."/>
            <person name="Post A.F."/>
            <person name="Regala W."/>
            <person name="Shah M."/>
            <person name="Shaw S.L."/>
            <person name="Steglich C."/>
            <person name="Sullivan M.B."/>
            <person name="Ting C.S."/>
            <person name="Tolonen A."/>
            <person name="Webb E.A."/>
            <person name="Zinser E.R."/>
            <person name="Chisholm S.W."/>
        </authorList>
    </citation>
    <scope>NUCLEOTIDE SEQUENCE [LARGE SCALE GENOMIC DNA]</scope>
    <source>
        <strain>MIT 9313</strain>
    </source>
</reference>
<proteinExistence type="inferred from homology"/>
<evidence type="ECO:0000255" key="1">
    <source>
        <dbReference type="HAMAP-Rule" id="MF_00252"/>
    </source>
</evidence>
<name>SYK_PROMM</name>
<protein>
    <recommendedName>
        <fullName evidence="1">Lysine--tRNA ligase</fullName>
        <ecNumber evidence="1">6.1.1.6</ecNumber>
    </recommendedName>
    <alternativeName>
        <fullName evidence="1">Lysyl-tRNA synthetase</fullName>
        <shortName evidence="1">LysRS</shortName>
    </alternativeName>
</protein>
<sequence>MARSVLSALSELRETRLEKAQALKELGNGPYALRFESSHSTANLQADHADLAKGEERLLTVSVAGRVMTRRVMGKLAFYTLADETGTIQLYLEKATIDAAASNELASGTFVQLTTLVDAGDWIGVTGVLRRTDRGELSVKVQQWQILSKSLQPLPDKWHGLADVEKRYRQRYLDLIVSPQSRETFRRRALMVSAIRRWLDDRAFLEIETPVLQAEAGGAEARPFITHHNTLDLPLYLRIATELHLKRLVVGGFERVYELGRIFRNEGMSTRHNPEFTSVEVYQAYADYIDMMVLTEQLISSVCTQICGSTRITYQGIEIDLTPPWRRASMHELVQEATGLDFMGFKDLAVAASAMARVGLEVPSKADSVGRLLNEAFEQAVEVSLIQPTFVLDYPIEISPLARQHRSKPGLVERFELFIVGRETANAFSELIDPLDQRQRLEAQQARRQAGDLEAHGVDEDFLQALEVGMPPTGGLGIGIDRLVMLFTDSPSIRDVIAFPLLRPELKT</sequence>
<keyword id="KW-0030">Aminoacyl-tRNA synthetase</keyword>
<keyword id="KW-0067">ATP-binding</keyword>
<keyword id="KW-0963">Cytoplasm</keyword>
<keyword id="KW-0436">Ligase</keyword>
<keyword id="KW-0460">Magnesium</keyword>
<keyword id="KW-0479">Metal-binding</keyword>
<keyword id="KW-0547">Nucleotide-binding</keyword>
<keyword id="KW-0648">Protein biosynthesis</keyword>
<keyword id="KW-1185">Reference proteome</keyword>
<comment type="catalytic activity">
    <reaction evidence="1">
        <text>tRNA(Lys) + L-lysine + ATP = L-lysyl-tRNA(Lys) + AMP + diphosphate</text>
        <dbReference type="Rhea" id="RHEA:20792"/>
        <dbReference type="Rhea" id="RHEA-COMP:9696"/>
        <dbReference type="Rhea" id="RHEA-COMP:9697"/>
        <dbReference type="ChEBI" id="CHEBI:30616"/>
        <dbReference type="ChEBI" id="CHEBI:32551"/>
        <dbReference type="ChEBI" id="CHEBI:33019"/>
        <dbReference type="ChEBI" id="CHEBI:78442"/>
        <dbReference type="ChEBI" id="CHEBI:78529"/>
        <dbReference type="ChEBI" id="CHEBI:456215"/>
        <dbReference type="EC" id="6.1.1.6"/>
    </reaction>
</comment>
<comment type="cofactor">
    <cofactor evidence="1">
        <name>Mg(2+)</name>
        <dbReference type="ChEBI" id="CHEBI:18420"/>
    </cofactor>
    <text evidence="1">Binds 3 Mg(2+) ions per subunit.</text>
</comment>
<comment type="subunit">
    <text evidence="1">Homodimer.</text>
</comment>
<comment type="subcellular location">
    <subcellularLocation>
        <location evidence="1">Cytoplasm</location>
    </subcellularLocation>
</comment>
<comment type="similarity">
    <text evidence="1">Belongs to the class-II aminoacyl-tRNA synthetase family.</text>
</comment>